<accession>P44864</accession>
<proteinExistence type="predicted"/>
<evidence type="ECO:0000256" key="1">
    <source>
        <dbReference type="SAM" id="MobiDB-lite"/>
    </source>
</evidence>
<sequence length="410" mass="45984">MLRFGVNQKTSLLLTALLSCGLLIFSPVSQSSDLNQIQKQIKQQESKIEKQKREQAKLQANLKKHESKINSVEGELLETEISLKEIRKQIADADKQLKQLEKQEREQKARLTKQIDIIYRSGINPSLIERMFAQDPTKAERMKVYYQHLNQVRIEMINNLKATQAQIAVQKKAILSQQKNHRNQLSTQKKQQQALQKAQQEHQSTLNELNKNLALDQDKLNTLKANEQALRQEIQRAEQAAREQEKREREALAQRQKAEEKRTSKPYQPTVQERQLLNSTSGLGAAKKQYSLPVSGSILHTFGSIQAGEVRWKGMVIGASAGTPVKAIAAGRVILAGYLNGYGYMVIVKHGETDLSLYGFNQAVSVKVGQLVSAGQVIAQVGNTGEISRSALYFGISRKGTPVNPAGWVR</sequence>
<protein>
    <recommendedName>
        <fullName>Uncharacterized protein HI_0756</fullName>
    </recommendedName>
</protein>
<feature type="chain" id="PRO_0000169612" description="Uncharacterized protein HI_0756">
    <location>
        <begin position="1"/>
        <end position="410"/>
    </location>
</feature>
<feature type="region of interest" description="Disordered" evidence="1">
    <location>
        <begin position="178"/>
        <end position="203"/>
    </location>
</feature>
<feature type="region of interest" description="Disordered" evidence="1">
    <location>
        <begin position="236"/>
        <end position="272"/>
    </location>
</feature>
<feature type="compositionally biased region" description="Polar residues" evidence="1">
    <location>
        <begin position="178"/>
        <end position="187"/>
    </location>
</feature>
<feature type="compositionally biased region" description="Low complexity" evidence="1">
    <location>
        <begin position="188"/>
        <end position="198"/>
    </location>
</feature>
<feature type="compositionally biased region" description="Basic and acidic residues" evidence="1">
    <location>
        <begin position="236"/>
        <end position="263"/>
    </location>
</feature>
<organism>
    <name type="scientific">Haemophilus influenzae (strain ATCC 51907 / DSM 11121 / KW20 / Rd)</name>
    <dbReference type="NCBI Taxonomy" id="71421"/>
    <lineage>
        <taxon>Bacteria</taxon>
        <taxon>Pseudomonadati</taxon>
        <taxon>Pseudomonadota</taxon>
        <taxon>Gammaproteobacteria</taxon>
        <taxon>Pasteurellales</taxon>
        <taxon>Pasteurellaceae</taxon>
        <taxon>Haemophilus</taxon>
    </lineage>
</organism>
<dbReference type="EMBL" id="L42023">
    <property type="protein sequence ID" value="AAC22415.1"/>
    <property type="molecule type" value="Genomic_DNA"/>
</dbReference>
<dbReference type="PIR" id="D64158">
    <property type="entry name" value="D64158"/>
</dbReference>
<dbReference type="RefSeq" id="NP_438915.1">
    <property type="nucleotide sequence ID" value="NC_000907.1"/>
</dbReference>
<dbReference type="SMR" id="P44864"/>
<dbReference type="STRING" id="71421.HI_0756"/>
<dbReference type="MEROPS" id="M23.950"/>
<dbReference type="EnsemblBacteria" id="AAC22415">
    <property type="protein sequence ID" value="AAC22415"/>
    <property type="gene ID" value="HI_0756"/>
</dbReference>
<dbReference type="KEGG" id="hin:HI_0756"/>
<dbReference type="PATRIC" id="fig|71421.8.peg.794"/>
<dbReference type="eggNOG" id="COG4942">
    <property type="taxonomic scope" value="Bacteria"/>
</dbReference>
<dbReference type="HOGENOM" id="CLU_029425_4_0_6"/>
<dbReference type="OrthoDB" id="9784703at2"/>
<dbReference type="PhylomeDB" id="P44864"/>
<dbReference type="BioCyc" id="HINF71421:G1GJ1-794-MONOMER"/>
<dbReference type="Proteomes" id="UP000000579">
    <property type="component" value="Chromosome"/>
</dbReference>
<dbReference type="GO" id="GO:0004222">
    <property type="term" value="F:metalloendopeptidase activity"/>
    <property type="evidence" value="ECO:0000318"/>
    <property type="project" value="GO_Central"/>
</dbReference>
<dbReference type="GO" id="GO:0000920">
    <property type="term" value="P:septum digestion after cytokinesis"/>
    <property type="evidence" value="ECO:0000318"/>
    <property type="project" value="GO_Central"/>
</dbReference>
<dbReference type="CDD" id="cd12797">
    <property type="entry name" value="M23_peptidase"/>
    <property type="match status" value="1"/>
</dbReference>
<dbReference type="FunFam" id="2.70.70.10:FF:000003">
    <property type="entry name" value="Murein hydrolase activator EnvC"/>
    <property type="match status" value="1"/>
</dbReference>
<dbReference type="Gene3D" id="6.10.250.3150">
    <property type="match status" value="1"/>
</dbReference>
<dbReference type="Gene3D" id="2.70.70.10">
    <property type="entry name" value="Glucose Permease (Domain IIA)"/>
    <property type="match status" value="1"/>
</dbReference>
<dbReference type="InterPro" id="IPR050570">
    <property type="entry name" value="Cell_wall_metabolism_enzyme"/>
</dbReference>
<dbReference type="InterPro" id="IPR011055">
    <property type="entry name" value="Dup_hybrid_motif"/>
</dbReference>
<dbReference type="InterPro" id="IPR016047">
    <property type="entry name" value="Peptidase_M23"/>
</dbReference>
<dbReference type="NCBIfam" id="NF008644">
    <property type="entry name" value="PRK11637.1"/>
    <property type="match status" value="1"/>
</dbReference>
<dbReference type="PANTHER" id="PTHR21666:SF270">
    <property type="entry name" value="MUREIN HYDROLASE ACTIVATOR ENVC"/>
    <property type="match status" value="1"/>
</dbReference>
<dbReference type="PANTHER" id="PTHR21666">
    <property type="entry name" value="PEPTIDASE-RELATED"/>
    <property type="match status" value="1"/>
</dbReference>
<dbReference type="Pfam" id="PF01551">
    <property type="entry name" value="Peptidase_M23"/>
    <property type="match status" value="1"/>
</dbReference>
<dbReference type="SUPFAM" id="SSF51261">
    <property type="entry name" value="Duplicated hybrid motif"/>
    <property type="match status" value="1"/>
</dbReference>
<dbReference type="PROSITE" id="PS51257">
    <property type="entry name" value="PROKAR_LIPOPROTEIN"/>
    <property type="match status" value="1"/>
</dbReference>
<name>Y756_HAEIN</name>
<keyword id="KW-1185">Reference proteome</keyword>
<reference key="1">
    <citation type="journal article" date="1995" name="Science">
        <title>Whole-genome random sequencing and assembly of Haemophilus influenzae Rd.</title>
        <authorList>
            <person name="Fleischmann R.D."/>
            <person name="Adams M.D."/>
            <person name="White O."/>
            <person name="Clayton R.A."/>
            <person name="Kirkness E.F."/>
            <person name="Kerlavage A.R."/>
            <person name="Bult C.J."/>
            <person name="Tomb J.-F."/>
            <person name="Dougherty B.A."/>
            <person name="Merrick J.M."/>
            <person name="McKenney K."/>
            <person name="Sutton G.G."/>
            <person name="FitzHugh W."/>
            <person name="Fields C.A."/>
            <person name="Gocayne J.D."/>
            <person name="Scott J.D."/>
            <person name="Shirley R."/>
            <person name="Liu L.-I."/>
            <person name="Glodek A."/>
            <person name="Kelley J.M."/>
            <person name="Weidman J.F."/>
            <person name="Phillips C.A."/>
            <person name="Spriggs T."/>
            <person name="Hedblom E."/>
            <person name="Cotton M.D."/>
            <person name="Utterback T.R."/>
            <person name="Hanna M.C."/>
            <person name="Nguyen D.T."/>
            <person name="Saudek D.M."/>
            <person name="Brandon R.C."/>
            <person name="Fine L.D."/>
            <person name="Fritchman J.L."/>
            <person name="Fuhrmann J.L."/>
            <person name="Geoghagen N.S.M."/>
            <person name="Gnehm C.L."/>
            <person name="McDonald L.A."/>
            <person name="Small K.V."/>
            <person name="Fraser C.M."/>
            <person name="Smith H.O."/>
            <person name="Venter J.C."/>
        </authorList>
    </citation>
    <scope>NUCLEOTIDE SEQUENCE [LARGE SCALE GENOMIC DNA]</scope>
    <source>
        <strain>ATCC 51907 / DSM 11121 / KW20 / Rd</strain>
    </source>
</reference>
<gene>
    <name type="ordered locus">HI_0756</name>
</gene>